<organism>
    <name type="scientific">Citrifermentans bemidjiense (strain ATCC BAA-1014 / DSM 16622 / JCM 12645 / Bem)</name>
    <name type="common">Geobacter bemidjiensis</name>
    <dbReference type="NCBI Taxonomy" id="404380"/>
    <lineage>
        <taxon>Bacteria</taxon>
        <taxon>Pseudomonadati</taxon>
        <taxon>Thermodesulfobacteriota</taxon>
        <taxon>Desulfuromonadia</taxon>
        <taxon>Geobacterales</taxon>
        <taxon>Geobacteraceae</taxon>
        <taxon>Citrifermentans</taxon>
    </lineage>
</organism>
<proteinExistence type="inferred from homology"/>
<gene>
    <name evidence="1" type="primary">rplO</name>
    <name type="ordered locus">Gbem_0952</name>
</gene>
<dbReference type="EMBL" id="CP001124">
    <property type="protein sequence ID" value="ACH37973.1"/>
    <property type="molecule type" value="Genomic_DNA"/>
</dbReference>
<dbReference type="RefSeq" id="WP_012529385.1">
    <property type="nucleotide sequence ID" value="NC_011146.1"/>
</dbReference>
<dbReference type="SMR" id="B5EFR9"/>
<dbReference type="STRING" id="404380.Gbem_0952"/>
<dbReference type="KEGG" id="gbm:Gbem_0952"/>
<dbReference type="eggNOG" id="COG0200">
    <property type="taxonomic scope" value="Bacteria"/>
</dbReference>
<dbReference type="HOGENOM" id="CLU_055188_4_2_7"/>
<dbReference type="OrthoDB" id="9810293at2"/>
<dbReference type="Proteomes" id="UP000008825">
    <property type="component" value="Chromosome"/>
</dbReference>
<dbReference type="GO" id="GO:0022625">
    <property type="term" value="C:cytosolic large ribosomal subunit"/>
    <property type="evidence" value="ECO:0007669"/>
    <property type="project" value="TreeGrafter"/>
</dbReference>
<dbReference type="GO" id="GO:0019843">
    <property type="term" value="F:rRNA binding"/>
    <property type="evidence" value="ECO:0007669"/>
    <property type="project" value="UniProtKB-UniRule"/>
</dbReference>
<dbReference type="GO" id="GO:0003735">
    <property type="term" value="F:structural constituent of ribosome"/>
    <property type="evidence" value="ECO:0007669"/>
    <property type="project" value="InterPro"/>
</dbReference>
<dbReference type="GO" id="GO:0006412">
    <property type="term" value="P:translation"/>
    <property type="evidence" value="ECO:0007669"/>
    <property type="project" value="UniProtKB-UniRule"/>
</dbReference>
<dbReference type="Gene3D" id="3.100.10.10">
    <property type="match status" value="1"/>
</dbReference>
<dbReference type="HAMAP" id="MF_01341">
    <property type="entry name" value="Ribosomal_uL15"/>
    <property type="match status" value="1"/>
</dbReference>
<dbReference type="InterPro" id="IPR030878">
    <property type="entry name" value="Ribosomal_uL15"/>
</dbReference>
<dbReference type="InterPro" id="IPR021131">
    <property type="entry name" value="Ribosomal_uL15/eL18"/>
</dbReference>
<dbReference type="InterPro" id="IPR036227">
    <property type="entry name" value="Ribosomal_uL15/eL18_sf"/>
</dbReference>
<dbReference type="InterPro" id="IPR005749">
    <property type="entry name" value="Ribosomal_uL15_bac-type"/>
</dbReference>
<dbReference type="InterPro" id="IPR001196">
    <property type="entry name" value="Ribosomal_uL15_CS"/>
</dbReference>
<dbReference type="NCBIfam" id="TIGR01071">
    <property type="entry name" value="rplO_bact"/>
    <property type="match status" value="1"/>
</dbReference>
<dbReference type="PANTHER" id="PTHR12934">
    <property type="entry name" value="50S RIBOSOMAL PROTEIN L15"/>
    <property type="match status" value="1"/>
</dbReference>
<dbReference type="PANTHER" id="PTHR12934:SF11">
    <property type="entry name" value="LARGE RIBOSOMAL SUBUNIT PROTEIN UL15M"/>
    <property type="match status" value="1"/>
</dbReference>
<dbReference type="Pfam" id="PF00828">
    <property type="entry name" value="Ribosomal_L27A"/>
    <property type="match status" value="1"/>
</dbReference>
<dbReference type="SUPFAM" id="SSF52080">
    <property type="entry name" value="Ribosomal proteins L15p and L18e"/>
    <property type="match status" value="1"/>
</dbReference>
<dbReference type="PROSITE" id="PS00475">
    <property type="entry name" value="RIBOSOMAL_L15"/>
    <property type="match status" value="1"/>
</dbReference>
<protein>
    <recommendedName>
        <fullName evidence="1">Large ribosomal subunit protein uL15</fullName>
    </recommendedName>
    <alternativeName>
        <fullName evidence="3">50S ribosomal protein L15</fullName>
    </alternativeName>
</protein>
<evidence type="ECO:0000255" key="1">
    <source>
        <dbReference type="HAMAP-Rule" id="MF_01341"/>
    </source>
</evidence>
<evidence type="ECO:0000256" key="2">
    <source>
        <dbReference type="SAM" id="MobiDB-lite"/>
    </source>
</evidence>
<evidence type="ECO:0000305" key="3"/>
<comment type="function">
    <text evidence="1">Binds to the 23S rRNA.</text>
</comment>
<comment type="subunit">
    <text evidence="1">Part of the 50S ribosomal subunit.</text>
</comment>
<comment type="similarity">
    <text evidence="1">Belongs to the universal ribosomal protein uL15 family.</text>
</comment>
<sequence length="146" mass="15377">MQLNTIKPAIGSTKNRKRIGRGVGSGHGKTATKGHKGQKARSGGSVKPGFEGGQMPMHRRLPKRGFTPLSKKDYALVNLCQLEVFEAGSVIDAEALLKSGIISGVRDGIKVLATGDITRALTIKAHKFSASAREKITAAGGSIEEI</sequence>
<feature type="chain" id="PRO_1000142824" description="Large ribosomal subunit protein uL15">
    <location>
        <begin position="1"/>
        <end position="146"/>
    </location>
</feature>
<feature type="region of interest" description="Disordered" evidence="2">
    <location>
        <begin position="1"/>
        <end position="64"/>
    </location>
</feature>
<feature type="compositionally biased region" description="Basic residues" evidence="2">
    <location>
        <begin position="30"/>
        <end position="39"/>
    </location>
</feature>
<name>RL15_CITBB</name>
<accession>B5EFR9</accession>
<keyword id="KW-1185">Reference proteome</keyword>
<keyword id="KW-0687">Ribonucleoprotein</keyword>
<keyword id="KW-0689">Ribosomal protein</keyword>
<keyword id="KW-0694">RNA-binding</keyword>
<keyword id="KW-0699">rRNA-binding</keyword>
<reference key="1">
    <citation type="submission" date="2008-07" db="EMBL/GenBank/DDBJ databases">
        <title>Complete sequence of Geobacter bemidjiensis BEM.</title>
        <authorList>
            <consortium name="US DOE Joint Genome Institute"/>
            <person name="Lucas S."/>
            <person name="Copeland A."/>
            <person name="Lapidus A."/>
            <person name="Glavina del Rio T."/>
            <person name="Dalin E."/>
            <person name="Tice H."/>
            <person name="Bruce D."/>
            <person name="Goodwin L."/>
            <person name="Pitluck S."/>
            <person name="Kiss H."/>
            <person name="Brettin T."/>
            <person name="Detter J.C."/>
            <person name="Han C."/>
            <person name="Kuske C.R."/>
            <person name="Schmutz J."/>
            <person name="Larimer F."/>
            <person name="Land M."/>
            <person name="Hauser L."/>
            <person name="Kyrpides N."/>
            <person name="Lykidis A."/>
            <person name="Lovley D."/>
            <person name="Richardson P."/>
        </authorList>
    </citation>
    <scope>NUCLEOTIDE SEQUENCE [LARGE SCALE GENOMIC DNA]</scope>
    <source>
        <strain>ATCC BAA-1014 / DSM 16622 / JCM 12645 / Bem</strain>
    </source>
</reference>